<feature type="chain" id="PRO_0000164483" description="Uridine kinase">
    <location>
        <begin position="1"/>
        <end position="216"/>
    </location>
</feature>
<feature type="binding site" evidence="1">
    <location>
        <begin position="16"/>
        <end position="23"/>
    </location>
    <ligand>
        <name>ATP</name>
        <dbReference type="ChEBI" id="CHEBI:30616"/>
    </ligand>
</feature>
<protein>
    <recommendedName>
        <fullName evidence="1">Uridine kinase</fullName>
        <ecNumber evidence="1">2.7.1.48</ecNumber>
    </recommendedName>
    <alternativeName>
        <fullName evidence="1">Cytidine monophosphokinase</fullName>
    </alternativeName>
    <alternativeName>
        <fullName evidence="1">Uridine monophosphokinase</fullName>
    </alternativeName>
</protein>
<organism>
    <name type="scientific">Pasteurella multocida (strain Pm70)</name>
    <dbReference type="NCBI Taxonomy" id="272843"/>
    <lineage>
        <taxon>Bacteria</taxon>
        <taxon>Pseudomonadati</taxon>
        <taxon>Pseudomonadota</taxon>
        <taxon>Gammaproteobacteria</taxon>
        <taxon>Pasteurellales</taxon>
        <taxon>Pasteurellaceae</taxon>
        <taxon>Pasteurella</taxon>
    </lineage>
</organism>
<keyword id="KW-0067">ATP-binding</keyword>
<keyword id="KW-0963">Cytoplasm</keyword>
<keyword id="KW-0418">Kinase</keyword>
<keyword id="KW-0547">Nucleotide-binding</keyword>
<keyword id="KW-1185">Reference proteome</keyword>
<keyword id="KW-0808">Transferase</keyword>
<evidence type="ECO:0000255" key="1">
    <source>
        <dbReference type="HAMAP-Rule" id="MF_00551"/>
    </source>
</evidence>
<dbReference type="EC" id="2.7.1.48" evidence="1"/>
<dbReference type="EMBL" id="AE004439">
    <property type="protein sequence ID" value="AAK03036.1"/>
    <property type="molecule type" value="Genomic_DNA"/>
</dbReference>
<dbReference type="RefSeq" id="WP_005722886.1">
    <property type="nucleotide sequence ID" value="NC_002663.1"/>
</dbReference>
<dbReference type="SMR" id="Q9CM85"/>
<dbReference type="STRING" id="272843.PM0952"/>
<dbReference type="EnsemblBacteria" id="AAK03036">
    <property type="protein sequence ID" value="AAK03036"/>
    <property type="gene ID" value="PM0952"/>
</dbReference>
<dbReference type="GeneID" id="77206259"/>
<dbReference type="KEGG" id="pmu:PM0952"/>
<dbReference type="HOGENOM" id="CLU_021278_1_2_6"/>
<dbReference type="OrthoDB" id="9777642at2"/>
<dbReference type="UniPathway" id="UPA00574">
    <property type="reaction ID" value="UER00637"/>
</dbReference>
<dbReference type="UniPathway" id="UPA00579">
    <property type="reaction ID" value="UER00640"/>
</dbReference>
<dbReference type="Proteomes" id="UP000000809">
    <property type="component" value="Chromosome"/>
</dbReference>
<dbReference type="GO" id="GO:0005737">
    <property type="term" value="C:cytoplasm"/>
    <property type="evidence" value="ECO:0007669"/>
    <property type="project" value="UniProtKB-SubCell"/>
</dbReference>
<dbReference type="GO" id="GO:0005524">
    <property type="term" value="F:ATP binding"/>
    <property type="evidence" value="ECO:0007669"/>
    <property type="project" value="UniProtKB-UniRule"/>
</dbReference>
<dbReference type="GO" id="GO:0043771">
    <property type="term" value="F:cytidine kinase activity"/>
    <property type="evidence" value="ECO:0007669"/>
    <property type="project" value="RHEA"/>
</dbReference>
<dbReference type="GO" id="GO:0004849">
    <property type="term" value="F:uridine kinase activity"/>
    <property type="evidence" value="ECO:0007669"/>
    <property type="project" value="UniProtKB-UniRule"/>
</dbReference>
<dbReference type="GO" id="GO:0044211">
    <property type="term" value="P:CTP salvage"/>
    <property type="evidence" value="ECO:0007669"/>
    <property type="project" value="UniProtKB-UniRule"/>
</dbReference>
<dbReference type="GO" id="GO:0044206">
    <property type="term" value="P:UMP salvage"/>
    <property type="evidence" value="ECO:0007669"/>
    <property type="project" value="UniProtKB-UniRule"/>
</dbReference>
<dbReference type="CDD" id="cd02023">
    <property type="entry name" value="UMPK"/>
    <property type="match status" value="1"/>
</dbReference>
<dbReference type="Gene3D" id="3.40.50.300">
    <property type="entry name" value="P-loop containing nucleotide triphosphate hydrolases"/>
    <property type="match status" value="1"/>
</dbReference>
<dbReference type="HAMAP" id="MF_00551">
    <property type="entry name" value="Uridine_kinase"/>
    <property type="match status" value="1"/>
</dbReference>
<dbReference type="InterPro" id="IPR027417">
    <property type="entry name" value="P-loop_NTPase"/>
</dbReference>
<dbReference type="InterPro" id="IPR006083">
    <property type="entry name" value="PRK/URK"/>
</dbReference>
<dbReference type="InterPro" id="IPR026008">
    <property type="entry name" value="Uridine_kinase"/>
</dbReference>
<dbReference type="InterPro" id="IPR000764">
    <property type="entry name" value="Uridine_kinase-like"/>
</dbReference>
<dbReference type="NCBIfam" id="NF004018">
    <property type="entry name" value="PRK05480.1"/>
    <property type="match status" value="1"/>
</dbReference>
<dbReference type="NCBIfam" id="TIGR00235">
    <property type="entry name" value="udk"/>
    <property type="match status" value="1"/>
</dbReference>
<dbReference type="PANTHER" id="PTHR10285">
    <property type="entry name" value="URIDINE KINASE"/>
    <property type="match status" value="1"/>
</dbReference>
<dbReference type="Pfam" id="PF00485">
    <property type="entry name" value="PRK"/>
    <property type="match status" value="1"/>
</dbReference>
<dbReference type="PRINTS" id="PR00988">
    <property type="entry name" value="URIDINKINASE"/>
</dbReference>
<dbReference type="SUPFAM" id="SSF52540">
    <property type="entry name" value="P-loop containing nucleoside triphosphate hydrolases"/>
    <property type="match status" value="1"/>
</dbReference>
<gene>
    <name evidence="1" type="primary">udk</name>
    <name type="ordered locus">PM0952</name>
</gene>
<reference key="1">
    <citation type="journal article" date="2001" name="Proc. Natl. Acad. Sci. U.S.A.">
        <title>Complete genomic sequence of Pasteurella multocida Pm70.</title>
        <authorList>
            <person name="May B.J."/>
            <person name="Zhang Q."/>
            <person name="Li L.L."/>
            <person name="Paustian M.L."/>
            <person name="Whittam T.S."/>
            <person name="Kapur V."/>
        </authorList>
    </citation>
    <scope>NUCLEOTIDE SEQUENCE [LARGE SCALE GENOMIC DNA]</scope>
    <source>
        <strain>Pm70</strain>
    </source>
</reference>
<sequence length="216" mass="24680">MSNSSTPSCIIIAIAGASASGKSLIASTVHRELCDELGCEEIGIISEDSYYKDQSHLDMEDRIKTNYDHPNSMDRHLLIEHLKALKSGQPVDIPVYSYVEHTRTNQVQHFEPKKVIILEGILLLTDEKLRDEVSVSVFVDTPLDICFIRRLQRDMKERGRSLESVVEQYRKTVRPMFLQFIEPSKQYADIVIPRGGKNRIAINMLKAQIRQLLGKR</sequence>
<accession>Q9CM85</accession>
<comment type="catalytic activity">
    <reaction evidence="1">
        <text>uridine + ATP = UMP + ADP + H(+)</text>
        <dbReference type="Rhea" id="RHEA:16825"/>
        <dbReference type="ChEBI" id="CHEBI:15378"/>
        <dbReference type="ChEBI" id="CHEBI:16704"/>
        <dbReference type="ChEBI" id="CHEBI:30616"/>
        <dbReference type="ChEBI" id="CHEBI:57865"/>
        <dbReference type="ChEBI" id="CHEBI:456216"/>
        <dbReference type="EC" id="2.7.1.48"/>
    </reaction>
</comment>
<comment type="catalytic activity">
    <reaction evidence="1">
        <text>cytidine + ATP = CMP + ADP + H(+)</text>
        <dbReference type="Rhea" id="RHEA:24674"/>
        <dbReference type="ChEBI" id="CHEBI:15378"/>
        <dbReference type="ChEBI" id="CHEBI:17562"/>
        <dbReference type="ChEBI" id="CHEBI:30616"/>
        <dbReference type="ChEBI" id="CHEBI:60377"/>
        <dbReference type="ChEBI" id="CHEBI:456216"/>
        <dbReference type="EC" id="2.7.1.48"/>
    </reaction>
</comment>
<comment type="pathway">
    <text evidence="1">Pyrimidine metabolism; CTP biosynthesis via salvage pathway; CTP from cytidine: step 1/3.</text>
</comment>
<comment type="pathway">
    <text evidence="1">Pyrimidine metabolism; UMP biosynthesis via salvage pathway; UMP from uridine: step 1/1.</text>
</comment>
<comment type="subcellular location">
    <subcellularLocation>
        <location evidence="1">Cytoplasm</location>
    </subcellularLocation>
</comment>
<comment type="similarity">
    <text evidence="1">Belongs to the uridine kinase family.</text>
</comment>
<proteinExistence type="inferred from homology"/>
<name>URK_PASMU</name>